<dbReference type="EC" id="4.3.3.7" evidence="1"/>
<dbReference type="EMBL" id="CU207211">
    <property type="protein sequence ID" value="CAL62311.1"/>
    <property type="molecule type" value="Genomic_DNA"/>
</dbReference>
<dbReference type="SMR" id="A4G724"/>
<dbReference type="STRING" id="204773.HEAR2175"/>
<dbReference type="KEGG" id="har:HEAR2175"/>
<dbReference type="eggNOG" id="COG0329">
    <property type="taxonomic scope" value="Bacteria"/>
</dbReference>
<dbReference type="HOGENOM" id="CLU_049343_7_1_4"/>
<dbReference type="OrthoDB" id="9782828at2"/>
<dbReference type="UniPathway" id="UPA00034">
    <property type="reaction ID" value="UER00017"/>
</dbReference>
<dbReference type="Proteomes" id="UP000006697">
    <property type="component" value="Chromosome"/>
</dbReference>
<dbReference type="GO" id="GO:0005829">
    <property type="term" value="C:cytosol"/>
    <property type="evidence" value="ECO:0007669"/>
    <property type="project" value="TreeGrafter"/>
</dbReference>
<dbReference type="GO" id="GO:0008840">
    <property type="term" value="F:4-hydroxy-tetrahydrodipicolinate synthase activity"/>
    <property type="evidence" value="ECO:0007669"/>
    <property type="project" value="UniProtKB-UniRule"/>
</dbReference>
<dbReference type="GO" id="GO:0019877">
    <property type="term" value="P:diaminopimelate biosynthetic process"/>
    <property type="evidence" value="ECO:0007669"/>
    <property type="project" value="UniProtKB-UniRule"/>
</dbReference>
<dbReference type="GO" id="GO:0009089">
    <property type="term" value="P:lysine biosynthetic process via diaminopimelate"/>
    <property type="evidence" value="ECO:0007669"/>
    <property type="project" value="UniProtKB-UniRule"/>
</dbReference>
<dbReference type="CDD" id="cd00950">
    <property type="entry name" value="DHDPS"/>
    <property type="match status" value="1"/>
</dbReference>
<dbReference type="Gene3D" id="3.20.20.70">
    <property type="entry name" value="Aldolase class I"/>
    <property type="match status" value="1"/>
</dbReference>
<dbReference type="HAMAP" id="MF_00418">
    <property type="entry name" value="DapA"/>
    <property type="match status" value="1"/>
</dbReference>
<dbReference type="InterPro" id="IPR013785">
    <property type="entry name" value="Aldolase_TIM"/>
</dbReference>
<dbReference type="InterPro" id="IPR005263">
    <property type="entry name" value="DapA"/>
</dbReference>
<dbReference type="InterPro" id="IPR002220">
    <property type="entry name" value="DapA-like"/>
</dbReference>
<dbReference type="InterPro" id="IPR020625">
    <property type="entry name" value="Schiff_base-form_aldolases_AS"/>
</dbReference>
<dbReference type="InterPro" id="IPR020624">
    <property type="entry name" value="Schiff_base-form_aldolases_CS"/>
</dbReference>
<dbReference type="NCBIfam" id="TIGR00674">
    <property type="entry name" value="dapA"/>
    <property type="match status" value="1"/>
</dbReference>
<dbReference type="PANTHER" id="PTHR12128:SF66">
    <property type="entry name" value="4-HYDROXY-2-OXOGLUTARATE ALDOLASE, MITOCHONDRIAL"/>
    <property type="match status" value="1"/>
</dbReference>
<dbReference type="PANTHER" id="PTHR12128">
    <property type="entry name" value="DIHYDRODIPICOLINATE SYNTHASE"/>
    <property type="match status" value="1"/>
</dbReference>
<dbReference type="Pfam" id="PF00701">
    <property type="entry name" value="DHDPS"/>
    <property type="match status" value="1"/>
</dbReference>
<dbReference type="PIRSF" id="PIRSF001365">
    <property type="entry name" value="DHDPS"/>
    <property type="match status" value="1"/>
</dbReference>
<dbReference type="PRINTS" id="PR00146">
    <property type="entry name" value="DHPICSNTHASE"/>
</dbReference>
<dbReference type="SMART" id="SM01130">
    <property type="entry name" value="DHDPS"/>
    <property type="match status" value="1"/>
</dbReference>
<dbReference type="SUPFAM" id="SSF51569">
    <property type="entry name" value="Aldolase"/>
    <property type="match status" value="1"/>
</dbReference>
<dbReference type="PROSITE" id="PS00665">
    <property type="entry name" value="DHDPS_1"/>
    <property type="match status" value="1"/>
</dbReference>
<dbReference type="PROSITE" id="PS00666">
    <property type="entry name" value="DHDPS_2"/>
    <property type="match status" value="1"/>
</dbReference>
<comment type="function">
    <text evidence="1">Catalyzes the condensation of (S)-aspartate-beta-semialdehyde [(S)-ASA] and pyruvate to 4-hydroxy-tetrahydrodipicolinate (HTPA).</text>
</comment>
<comment type="catalytic activity">
    <reaction evidence="1">
        <text>L-aspartate 4-semialdehyde + pyruvate = (2S,4S)-4-hydroxy-2,3,4,5-tetrahydrodipicolinate + H2O + H(+)</text>
        <dbReference type="Rhea" id="RHEA:34171"/>
        <dbReference type="ChEBI" id="CHEBI:15361"/>
        <dbReference type="ChEBI" id="CHEBI:15377"/>
        <dbReference type="ChEBI" id="CHEBI:15378"/>
        <dbReference type="ChEBI" id="CHEBI:67139"/>
        <dbReference type="ChEBI" id="CHEBI:537519"/>
        <dbReference type="EC" id="4.3.3.7"/>
    </reaction>
</comment>
<comment type="pathway">
    <text evidence="1">Amino-acid biosynthesis; L-lysine biosynthesis via DAP pathway; (S)-tetrahydrodipicolinate from L-aspartate: step 3/4.</text>
</comment>
<comment type="subunit">
    <text evidence="1">Homotetramer; dimer of dimers.</text>
</comment>
<comment type="subcellular location">
    <subcellularLocation>
        <location evidence="1">Cytoplasm</location>
    </subcellularLocation>
</comment>
<comment type="similarity">
    <text evidence="1">Belongs to the DapA family.</text>
</comment>
<comment type="caution">
    <text evidence="2">Was originally thought to be a dihydrodipicolinate synthase (DHDPS), catalyzing the condensation of (S)-aspartate-beta-semialdehyde [(S)-ASA] and pyruvate to dihydrodipicolinate (DHDP). However, it was shown in E.coli that the product of the enzymatic reaction is not dihydrodipicolinate but in fact (4S)-4-hydroxy-2,3,4,5-tetrahydro-(2S)-dipicolinic acid (HTPA), and that the consecutive dehydration reaction leading to DHDP is not spontaneous but catalyzed by DapB.</text>
</comment>
<accession>A4G724</accession>
<protein>
    <recommendedName>
        <fullName evidence="1">4-hydroxy-tetrahydrodipicolinate synthase</fullName>
        <shortName evidence="1">HTPA synthase</shortName>
        <ecNumber evidence="1">4.3.3.7</ecNumber>
    </recommendedName>
</protein>
<feature type="chain" id="PRO_1000050198" description="4-hydroxy-tetrahydrodipicolinate synthase">
    <location>
        <begin position="1"/>
        <end position="292"/>
    </location>
</feature>
<feature type="active site" description="Proton donor/acceptor" evidence="1">
    <location>
        <position position="133"/>
    </location>
</feature>
<feature type="active site" description="Schiff-base intermediate with substrate" evidence="1">
    <location>
        <position position="161"/>
    </location>
</feature>
<feature type="binding site" evidence="1">
    <location>
        <position position="45"/>
    </location>
    <ligand>
        <name>pyruvate</name>
        <dbReference type="ChEBI" id="CHEBI:15361"/>
    </ligand>
</feature>
<feature type="binding site" evidence="1">
    <location>
        <position position="203"/>
    </location>
    <ligand>
        <name>pyruvate</name>
        <dbReference type="ChEBI" id="CHEBI:15361"/>
    </ligand>
</feature>
<feature type="site" description="Part of a proton relay during catalysis" evidence="1">
    <location>
        <position position="44"/>
    </location>
</feature>
<feature type="site" description="Part of a proton relay during catalysis" evidence="1">
    <location>
        <position position="107"/>
    </location>
</feature>
<reference key="1">
    <citation type="journal article" date="2007" name="PLoS Genet.">
        <title>A tale of two oxidation states: bacterial colonization of arsenic-rich environments.</title>
        <authorList>
            <person name="Muller D."/>
            <person name="Medigue C."/>
            <person name="Koechler S."/>
            <person name="Barbe V."/>
            <person name="Barakat M."/>
            <person name="Talla E."/>
            <person name="Bonnefoy V."/>
            <person name="Krin E."/>
            <person name="Arsene-Ploetze F."/>
            <person name="Carapito C."/>
            <person name="Chandler M."/>
            <person name="Cournoyer B."/>
            <person name="Cruveiller S."/>
            <person name="Dossat C."/>
            <person name="Duval S."/>
            <person name="Heymann M."/>
            <person name="Leize E."/>
            <person name="Lieutaud A."/>
            <person name="Lievremont D."/>
            <person name="Makita Y."/>
            <person name="Mangenot S."/>
            <person name="Nitschke W."/>
            <person name="Ortet P."/>
            <person name="Perdrial N."/>
            <person name="Schoepp B."/>
            <person name="Siguier P."/>
            <person name="Simeonova D.D."/>
            <person name="Rouy Z."/>
            <person name="Segurens B."/>
            <person name="Turlin E."/>
            <person name="Vallenet D."/>
            <person name="van Dorsselaer A."/>
            <person name="Weiss S."/>
            <person name="Weissenbach J."/>
            <person name="Lett M.-C."/>
            <person name="Danchin A."/>
            <person name="Bertin P.N."/>
        </authorList>
    </citation>
    <scope>NUCLEOTIDE SEQUENCE [LARGE SCALE GENOMIC DNA]</scope>
    <source>
        <strain>ULPAs1</strain>
    </source>
</reference>
<organism>
    <name type="scientific">Herminiimonas arsenicoxydans</name>
    <dbReference type="NCBI Taxonomy" id="204773"/>
    <lineage>
        <taxon>Bacteria</taxon>
        <taxon>Pseudomonadati</taxon>
        <taxon>Pseudomonadota</taxon>
        <taxon>Betaproteobacteria</taxon>
        <taxon>Burkholderiales</taxon>
        <taxon>Oxalobacteraceae</taxon>
        <taxon>Herminiimonas</taxon>
    </lineage>
</organism>
<gene>
    <name evidence="1" type="primary">dapA</name>
    <name type="ordered locus">HEAR2175</name>
</gene>
<evidence type="ECO:0000255" key="1">
    <source>
        <dbReference type="HAMAP-Rule" id="MF_00418"/>
    </source>
</evidence>
<evidence type="ECO:0000305" key="2"/>
<keyword id="KW-0028">Amino-acid biosynthesis</keyword>
<keyword id="KW-0963">Cytoplasm</keyword>
<keyword id="KW-0220">Diaminopimelate biosynthesis</keyword>
<keyword id="KW-0456">Lyase</keyword>
<keyword id="KW-0457">Lysine biosynthesis</keyword>
<keyword id="KW-1185">Reference proteome</keyword>
<keyword id="KW-0704">Schiff base</keyword>
<name>DAPA_HERAR</name>
<proteinExistence type="inferred from homology"/>
<sequence>MIQGSIVAIVTPMHADGALDLPGLRKLIDWHIAEGTDGIVIVGTTGESPTVSVDEHCELIRVAVEHTAKRIPIIAGTGGNSTSEAIELTQFAKDVGADASLQVVPYYNRPTQEGMYQHFKKIVEAVDLPAILYNVPGRTVADMSNETILRLAQIPSVIGVKDATGNISRGIDLMRLRPKDFAVYSGDDATAMALMLCGANGNISVTANIAPRGMHQLCDAAINQRVAEAIAINNKLVPLHNKLFIEPNPVPLKWAMAEIGLIPSGMRLPIVPLAAEYHDIVRAAMRESGVLQ</sequence>